<protein>
    <recommendedName>
        <fullName>Uncharacterized protein YnjH</fullName>
    </recommendedName>
</protein>
<name>YNJH_ECOLI</name>
<proteinExistence type="inferred from homology"/>
<accession>P76227</accession>
<accession>Q2MB33</accession>
<reference key="1">
    <citation type="journal article" date="1997" name="Science">
        <title>The complete genome sequence of Escherichia coli K-12.</title>
        <authorList>
            <person name="Blattner F.R."/>
            <person name="Plunkett G. III"/>
            <person name="Bloch C.A."/>
            <person name="Perna N.T."/>
            <person name="Burland V."/>
            <person name="Riley M."/>
            <person name="Collado-Vides J."/>
            <person name="Glasner J.D."/>
            <person name="Rode C.K."/>
            <person name="Mayhew G.F."/>
            <person name="Gregor J."/>
            <person name="Davis N.W."/>
            <person name="Kirkpatrick H.A."/>
            <person name="Goeden M.A."/>
            <person name="Rose D.J."/>
            <person name="Mau B."/>
            <person name="Shao Y."/>
        </authorList>
    </citation>
    <scope>NUCLEOTIDE SEQUENCE [LARGE SCALE GENOMIC DNA]</scope>
    <source>
        <strain>K12 / MG1655 / ATCC 47076</strain>
    </source>
</reference>
<reference key="2">
    <citation type="journal article" date="2006" name="Mol. Syst. Biol.">
        <title>Highly accurate genome sequences of Escherichia coli K-12 strains MG1655 and W3110.</title>
        <authorList>
            <person name="Hayashi K."/>
            <person name="Morooka N."/>
            <person name="Yamamoto Y."/>
            <person name="Fujita K."/>
            <person name="Isono K."/>
            <person name="Choi S."/>
            <person name="Ohtsubo E."/>
            <person name="Baba T."/>
            <person name="Wanner B.L."/>
            <person name="Mori H."/>
            <person name="Horiuchi T."/>
        </authorList>
    </citation>
    <scope>NUCLEOTIDE SEQUENCE [LARGE SCALE GENOMIC DNA]</scope>
    <source>
        <strain>K12 / W3110 / ATCC 27325 / DSM 5911</strain>
    </source>
</reference>
<evidence type="ECO:0000255" key="1"/>
<gene>
    <name type="primary">ynjH</name>
    <name type="ordered locus">b1760</name>
    <name type="ordered locus">JW1749</name>
</gene>
<dbReference type="EMBL" id="U00096">
    <property type="protein sequence ID" value="AAC74830.1"/>
    <property type="molecule type" value="Genomic_DNA"/>
</dbReference>
<dbReference type="EMBL" id="AP009048">
    <property type="protein sequence ID" value="BAE76523.1"/>
    <property type="molecule type" value="Genomic_DNA"/>
</dbReference>
<dbReference type="PIR" id="H64935">
    <property type="entry name" value="H64935"/>
</dbReference>
<dbReference type="RefSeq" id="NP_416274.1">
    <property type="nucleotide sequence ID" value="NC_000913.3"/>
</dbReference>
<dbReference type="RefSeq" id="WP_000085240.1">
    <property type="nucleotide sequence ID" value="NZ_SSZK01000001.1"/>
</dbReference>
<dbReference type="BioGRID" id="4260321">
    <property type="interactions" value="11"/>
</dbReference>
<dbReference type="DIP" id="DIP-12784N"/>
<dbReference type="FunCoup" id="P76227">
    <property type="interactions" value="3"/>
</dbReference>
<dbReference type="STRING" id="511145.b1760"/>
<dbReference type="jPOST" id="P76227"/>
<dbReference type="PaxDb" id="511145-b1760"/>
<dbReference type="EnsemblBacteria" id="AAC74830">
    <property type="protein sequence ID" value="AAC74830"/>
    <property type="gene ID" value="b1760"/>
</dbReference>
<dbReference type="GeneID" id="946279"/>
<dbReference type="KEGG" id="ecj:JW1749"/>
<dbReference type="KEGG" id="eco:b1760"/>
<dbReference type="KEGG" id="ecoc:C3026_10045"/>
<dbReference type="PATRIC" id="fig|511145.12.peg.1833"/>
<dbReference type="EchoBASE" id="EB3766"/>
<dbReference type="eggNOG" id="ENOG5032YHQ">
    <property type="taxonomic scope" value="Bacteria"/>
</dbReference>
<dbReference type="HOGENOM" id="CLU_170184_0_0_6"/>
<dbReference type="InParanoid" id="P76227"/>
<dbReference type="OMA" id="CCIYQDQ"/>
<dbReference type="OrthoDB" id="6400575at2"/>
<dbReference type="PhylomeDB" id="P76227"/>
<dbReference type="BioCyc" id="EcoCyc:G6955-MONOMER"/>
<dbReference type="PRO" id="PR:P76227"/>
<dbReference type="Proteomes" id="UP000000625">
    <property type="component" value="Chromosome"/>
</dbReference>
<dbReference type="InterPro" id="IPR009971">
    <property type="entry name" value="DUF1496"/>
</dbReference>
<dbReference type="Pfam" id="PF07383">
    <property type="entry name" value="DUF1496"/>
    <property type="match status" value="1"/>
</dbReference>
<feature type="signal peptide" evidence="1">
    <location>
        <begin position="1"/>
        <end position="18"/>
    </location>
</feature>
<feature type="chain" id="PRO_0000013860" description="Uncharacterized protein YnjH">
    <location>
        <begin position="19"/>
        <end position="90"/>
    </location>
</feature>
<sequence length="90" mass="9947">MSRALFAVVLAFPLIALANPHYRPDVEVNVPPEVFSSGGQSAQPCTQCCVYQDQNYSEGAVIKAEGILLQCQRDDKTLSTNPLVWRRVKP</sequence>
<organism>
    <name type="scientific">Escherichia coli (strain K12)</name>
    <dbReference type="NCBI Taxonomy" id="83333"/>
    <lineage>
        <taxon>Bacteria</taxon>
        <taxon>Pseudomonadati</taxon>
        <taxon>Pseudomonadota</taxon>
        <taxon>Gammaproteobacteria</taxon>
        <taxon>Enterobacterales</taxon>
        <taxon>Enterobacteriaceae</taxon>
        <taxon>Escherichia</taxon>
    </lineage>
</organism>
<keyword id="KW-1185">Reference proteome</keyword>
<keyword id="KW-0732">Signal</keyword>